<feature type="chain" id="PRO_0000306871" description="Zinc finger protein 521">
    <location>
        <begin position="1"/>
        <end position="1311"/>
    </location>
</feature>
<feature type="zinc finger region" description="C2H2-type 1; degenerate" evidence="2">
    <location>
        <begin position="47"/>
        <end position="67"/>
    </location>
</feature>
<feature type="zinc finger region" description="C2H2-type 2" evidence="2">
    <location>
        <begin position="118"/>
        <end position="140"/>
    </location>
</feature>
<feature type="zinc finger region" description="C2H2-type 3" evidence="2">
    <location>
        <begin position="146"/>
        <end position="168"/>
    </location>
</feature>
<feature type="zinc finger region" description="C2H2-type 4" evidence="2">
    <location>
        <begin position="174"/>
        <end position="196"/>
    </location>
</feature>
<feature type="zinc finger region" description="C2H2-type 5" evidence="2">
    <location>
        <begin position="202"/>
        <end position="224"/>
    </location>
</feature>
<feature type="zinc finger region" description="C2H2-type 6" evidence="2">
    <location>
        <begin position="246"/>
        <end position="269"/>
    </location>
</feature>
<feature type="zinc finger region" description="C2H2-type 7" evidence="2">
    <location>
        <begin position="281"/>
        <end position="304"/>
    </location>
</feature>
<feature type="zinc finger region" description="C2H2-type 8" evidence="2">
    <location>
        <begin position="310"/>
        <end position="332"/>
    </location>
</feature>
<feature type="zinc finger region" description="C2H2-type 9; degenerate" evidence="2">
    <location>
        <begin position="405"/>
        <end position="429"/>
    </location>
</feature>
<feature type="zinc finger region" description="C2H2-type 10" evidence="2">
    <location>
        <begin position="437"/>
        <end position="460"/>
    </location>
</feature>
<feature type="zinc finger region" description="C2H2-type 11" evidence="2">
    <location>
        <begin position="477"/>
        <end position="500"/>
    </location>
</feature>
<feature type="zinc finger region" description="C2H2-type 12" evidence="2">
    <location>
        <begin position="513"/>
        <end position="536"/>
    </location>
</feature>
<feature type="zinc finger region" description="C2H2-type 13; atypical" evidence="2">
    <location>
        <begin position="560"/>
        <end position="585"/>
    </location>
</feature>
<feature type="zinc finger region" description="C2H2-type 14" evidence="2">
    <location>
        <begin position="634"/>
        <end position="656"/>
    </location>
</feature>
<feature type="zinc finger region" description="C2H2-type 15" evidence="2">
    <location>
        <begin position="664"/>
        <end position="686"/>
    </location>
</feature>
<feature type="zinc finger region" description="C2H2-type 16" evidence="2">
    <location>
        <begin position="694"/>
        <end position="717"/>
    </location>
</feature>
<feature type="zinc finger region" description="C2H2-type 17" evidence="2">
    <location>
        <begin position="722"/>
        <end position="745"/>
    </location>
</feature>
<feature type="zinc finger region" description="C2H2-type 18" evidence="2">
    <location>
        <begin position="752"/>
        <end position="775"/>
    </location>
</feature>
<feature type="zinc finger region" description="C2H2-type 19" evidence="2">
    <location>
        <begin position="783"/>
        <end position="805"/>
    </location>
</feature>
<feature type="zinc finger region" description="C2H2-type 20" evidence="2">
    <location>
        <begin position="809"/>
        <end position="832"/>
    </location>
</feature>
<feature type="zinc finger region" description="C2H2-type 21; degenerate" evidence="2">
    <location>
        <begin position="886"/>
        <end position="908"/>
    </location>
</feature>
<feature type="zinc finger region" description="C2H2-type 22" evidence="2">
    <location>
        <begin position="930"/>
        <end position="952"/>
    </location>
</feature>
<feature type="zinc finger region" description="C2H2-type 23" evidence="2">
    <location>
        <begin position="959"/>
        <end position="981"/>
    </location>
</feature>
<feature type="zinc finger region" description="C2H2-type 24" evidence="2">
    <location>
        <begin position="1020"/>
        <end position="1042"/>
    </location>
</feature>
<feature type="zinc finger region" description="C2H2-type 25; degenerate" evidence="2">
    <location>
        <begin position="1065"/>
        <end position="1083"/>
    </location>
</feature>
<feature type="zinc finger region" description="C2H2-type 26" evidence="2">
    <location>
        <begin position="1138"/>
        <end position="1161"/>
    </location>
</feature>
<feature type="zinc finger region" description="C2H2-type 27" evidence="2">
    <location>
        <begin position="1195"/>
        <end position="1217"/>
    </location>
</feature>
<feature type="zinc finger region" description="C2H2-type 28" evidence="2">
    <location>
        <begin position="1225"/>
        <end position="1247"/>
    </location>
</feature>
<feature type="zinc finger region" description="C2H2-type 29" evidence="2">
    <location>
        <begin position="1256"/>
        <end position="1279"/>
    </location>
</feature>
<feature type="zinc finger region" description="C2H2-type 30" evidence="2">
    <location>
        <begin position="1286"/>
        <end position="1309"/>
    </location>
</feature>
<feature type="region of interest" description="Disordered" evidence="3">
    <location>
        <begin position="1"/>
        <end position="37"/>
    </location>
</feature>
<feature type="region of interest" description="Disordered" evidence="3">
    <location>
        <begin position="81"/>
        <end position="108"/>
    </location>
</feature>
<feature type="region of interest" description="Disordered" evidence="3">
    <location>
        <begin position="349"/>
        <end position="397"/>
    </location>
</feature>
<feature type="region of interest" description="Disordered" evidence="3">
    <location>
        <begin position="863"/>
        <end position="882"/>
    </location>
</feature>
<feature type="region of interest" description="Disordered" evidence="3">
    <location>
        <begin position="1168"/>
        <end position="1188"/>
    </location>
</feature>
<feature type="compositionally biased region" description="Basic residues" evidence="3">
    <location>
        <begin position="1"/>
        <end position="10"/>
    </location>
</feature>
<feature type="compositionally biased region" description="Basic and acidic residues" evidence="3">
    <location>
        <begin position="11"/>
        <end position="21"/>
    </location>
</feature>
<feature type="compositionally biased region" description="Low complexity" evidence="3">
    <location>
        <begin position="87"/>
        <end position="102"/>
    </location>
</feature>
<feature type="compositionally biased region" description="Low complexity" evidence="3">
    <location>
        <begin position="349"/>
        <end position="358"/>
    </location>
</feature>
<feature type="compositionally biased region" description="Polar residues" evidence="3">
    <location>
        <begin position="359"/>
        <end position="370"/>
    </location>
</feature>
<feature type="compositionally biased region" description="Polar residues" evidence="3">
    <location>
        <begin position="387"/>
        <end position="397"/>
    </location>
</feature>
<feature type="compositionally biased region" description="Polar residues" evidence="3">
    <location>
        <begin position="1168"/>
        <end position="1178"/>
    </location>
</feature>
<feature type="site" description="Breakpoint for translocation to form PAX5-ZNF521">
    <location>
        <begin position="72"/>
        <end position="73"/>
    </location>
</feature>
<feature type="modified residue" description="Phosphoserine" evidence="9">
    <location>
        <position position="546"/>
    </location>
</feature>
<feature type="modified residue" description="Phosphoserine" evidence="8">
    <location>
        <position position="605"/>
    </location>
</feature>
<feature type="modified residue" description="Phosphoserine" evidence="8">
    <location>
        <position position="608"/>
    </location>
</feature>
<feature type="cross-link" description="Glycyl lysine isopeptide (Lys-Gly) (interchain with G-Cter in SUMO2)" evidence="10">
    <location>
        <position position="1146"/>
    </location>
</feature>
<feature type="sequence conflict" description="In Ref. 1; CAD57322." evidence="7" ref="1">
    <original>K</original>
    <variation>E</variation>
    <location>
        <position position="203"/>
    </location>
</feature>
<feature type="sequence conflict" description="In Ref. 6; ABI33104." evidence="7" ref="6">
    <original>E</original>
    <variation>K</variation>
    <location>
        <position position="301"/>
    </location>
</feature>
<feature type="sequence conflict" description="In Ref. 2; BAB13829." evidence="7" ref="2">
    <original>K</original>
    <variation>Q</variation>
    <location>
        <position position="599"/>
    </location>
</feature>
<feature type="sequence conflict" description="In Ref. 1; CAD57322." evidence="7" ref="1">
    <original>F</original>
    <variation>L</variation>
    <location>
        <position position="649"/>
    </location>
</feature>
<feature type="sequence conflict" description="In Ref. 1; CAD57322." evidence="7" ref="1">
    <original>K</original>
    <variation>E</variation>
    <location>
        <position position="701"/>
    </location>
</feature>
<feature type="sequence conflict" description="In Ref. 1; CAD57322 and 6; CAB56016." evidence="7" ref="1 6">
    <original>N</original>
    <variation>S</variation>
    <location>
        <position position="933"/>
    </location>
</feature>
<feature type="sequence conflict" description="In Ref. 1; CAD57322 and 6; CAB56016." evidence="7" ref="1 6">
    <original>G</original>
    <variation>A</variation>
    <location>
        <position position="1019"/>
    </location>
</feature>
<feature type="sequence conflict" description="In Ref. 7; AAG49442." evidence="7" ref="7">
    <original>L</original>
    <variation>M</variation>
    <location>
        <position position="1173"/>
    </location>
</feature>
<feature type="sequence conflict" description="In Ref. 7; AAG49442." evidence="7" ref="7">
    <original>P</original>
    <variation>T</variation>
    <location>
        <position position="1176"/>
    </location>
</feature>
<feature type="sequence conflict" description="In Ref. 7; AAG49442." evidence="7" ref="7">
    <original>F</original>
    <variation>L</variation>
    <location>
        <position position="1204"/>
    </location>
</feature>
<organism>
    <name type="scientific">Homo sapiens</name>
    <name type="common">Human</name>
    <dbReference type="NCBI Taxonomy" id="9606"/>
    <lineage>
        <taxon>Eukaryota</taxon>
        <taxon>Metazoa</taxon>
        <taxon>Chordata</taxon>
        <taxon>Craniata</taxon>
        <taxon>Vertebrata</taxon>
        <taxon>Euteleostomi</taxon>
        <taxon>Mammalia</taxon>
        <taxon>Eutheria</taxon>
        <taxon>Euarchontoglires</taxon>
        <taxon>Primates</taxon>
        <taxon>Haplorrhini</taxon>
        <taxon>Catarrhini</taxon>
        <taxon>Hominidae</taxon>
        <taxon>Homo</taxon>
    </lineage>
</organism>
<keyword id="KW-0010">Activator</keyword>
<keyword id="KW-0160">Chromosomal rearrangement</keyword>
<keyword id="KW-0217">Developmental protein</keyword>
<keyword id="KW-0221">Differentiation</keyword>
<keyword id="KW-0238">DNA-binding</keyword>
<keyword id="KW-1017">Isopeptide bond</keyword>
<keyword id="KW-0479">Metal-binding</keyword>
<keyword id="KW-0539">Nucleus</keyword>
<keyword id="KW-0597">Phosphoprotein</keyword>
<keyword id="KW-1267">Proteomics identification</keyword>
<keyword id="KW-0656">Proto-oncogene</keyword>
<keyword id="KW-1185">Reference proteome</keyword>
<keyword id="KW-0677">Repeat</keyword>
<keyword id="KW-0678">Repressor</keyword>
<keyword id="KW-0804">Transcription</keyword>
<keyword id="KW-0805">Transcription regulation</keyword>
<keyword id="KW-0832">Ubl conjugation</keyword>
<keyword id="KW-0862">Zinc</keyword>
<keyword id="KW-0863">Zinc-finger</keyword>
<protein>
    <recommendedName>
        <fullName>Zinc finger protein 521</fullName>
    </recommendedName>
    <alternativeName>
        <fullName>Early hematopoietic zinc finger protein</fullName>
    </alternativeName>
    <alternativeName>
        <fullName>LYST-interacting protein 3</fullName>
    </alternativeName>
</protein>
<comment type="function">
    <text evidence="5">Transcription factor that can both act as an activator or a repressor depending on the context. Involved in BMP signaling and in the regulation of the immature compartment of the hematopoietic system. Associates with SMADs in response to BMP2 leading to activate transcription of BMP target genes. Acts as a transcriptional repressor via its interaction with EBF1, a transcription factor involved specification of B-cell lineage; this interaction preventing EBF1 to bind DNA and activate target genes.</text>
</comment>
<comment type="subunit">
    <text evidence="4 5">Interacts with EBF1. Interacts with SMAD1 and SMAD4.</text>
</comment>
<comment type="interaction">
    <interactant intactId="EBI-6597673">
        <id>Q96K83</id>
    </interactant>
    <interactant intactId="EBI-750700">
        <id>Q8N9N8</id>
        <label>EIF1AD</label>
    </interactant>
    <organismsDiffer>false</organismsDiffer>
    <experiments>3</experiments>
</comment>
<comment type="interaction">
    <interactant intactId="EBI-6597673">
        <id>Q96K83</id>
    </interactant>
    <interactant intactId="EBI-355482">
        <id>P54136</id>
        <label>RARS1</label>
    </interactant>
    <organismsDiffer>false</organismsDiffer>
    <experiments>3</experiments>
</comment>
<comment type="subcellular location">
    <subcellularLocation>
        <location evidence="1">Nucleus</location>
    </subcellularLocation>
</comment>
<comment type="tissue specificity">
    <text evidence="5">Predominantly expressed in hematopoietic cells. Present in organs and tissues that contain stem and progenitor cells, myeloid and/or lymphoid: placenta, spleen, lymph nodes, thymus, bone marrow and fetal liver. Within the hematopoietic system, it is abundant in CD34(+) cells but undetectable in mature peripheral blood leukocytes, and its levels rapidly decrease during the differentiation of CD34(+) cells in response to hemopoietins.</text>
</comment>
<comment type="domain">
    <text evidence="1">Uses different DNA- and protein-binding zinc fingers to regulate the distinct BMP-Smad and hematopoietic system.</text>
</comment>
<comment type="disease">
    <text evidence="6">A chromosomal aberration involving ZNF521 is found in acute lymphoblastic leukemia. Translocation t(9;18)(p13;q11.2) with PAX5. The translocation generates the PAX5-ZNF521 oncogene consisting of the N-terminus part of PAX5 and the C-terminus part of ZNF521.</text>
</comment>
<comment type="similarity">
    <text evidence="7">Belongs to the krueppel C2H2-type zinc-finger protein family.</text>
</comment>
<comment type="sequence caution" evidence="7">
    <conflict type="erroneous initiation">
        <sequence resource="EMBL-CDS" id="ABI33104"/>
    </conflict>
</comment>
<comment type="sequence caution" evidence="7">
    <conflict type="erroneous initiation">
        <sequence resource="EMBL-CDS" id="BAB13829"/>
    </conflict>
</comment>
<evidence type="ECO:0000250" key="1"/>
<evidence type="ECO:0000255" key="2">
    <source>
        <dbReference type="PROSITE-ProRule" id="PRU00042"/>
    </source>
</evidence>
<evidence type="ECO:0000256" key="3">
    <source>
        <dbReference type="SAM" id="MobiDB-lite"/>
    </source>
</evidence>
<evidence type="ECO:0000269" key="4">
    <source>
    </source>
</evidence>
<evidence type="ECO:0000269" key="5">
    <source>
    </source>
</evidence>
<evidence type="ECO:0000269" key="6">
    <source>
    </source>
</evidence>
<evidence type="ECO:0000305" key="7"/>
<evidence type="ECO:0007744" key="8">
    <source>
    </source>
</evidence>
<evidence type="ECO:0007744" key="9">
    <source>
    </source>
</evidence>
<evidence type="ECO:0007744" key="10">
    <source>
    </source>
</evidence>
<proteinExistence type="evidence at protein level"/>
<reference key="1">
    <citation type="journal article" date="2004" name="Blood">
        <title>Early hematopoietic zinc finger protein (EHZF), the human homolog to mouse Evi3, is highly expressed in primitive human hematopoietic cells.</title>
        <authorList>
            <person name="Bond H.M."/>
            <person name="Mesuraca M."/>
            <person name="Carbone E."/>
            <person name="Bonelli P."/>
            <person name="Agosti V."/>
            <person name="Amodio N."/>
            <person name="De Rosa G."/>
            <person name="Di Nicola M."/>
            <person name="Gianni A.M."/>
            <person name="Moore M.A."/>
            <person name="Hata A."/>
            <person name="Grieco M."/>
            <person name="Morrone G."/>
            <person name="Venuta S."/>
        </authorList>
    </citation>
    <scope>NUCLEOTIDE SEQUENCE [MRNA]</scope>
    <scope>FUNCTION</scope>
    <scope>DNA-BINDING</scope>
    <scope>TISSUE SPECIFICITY</scope>
    <scope>INTERACTION WITH EBF1; SMAD1 AND SMAD4</scope>
</reference>
<reference key="2">
    <citation type="journal article" date="2004" name="Nat. Genet.">
        <title>Complete sequencing and characterization of 21,243 full-length human cDNAs.</title>
        <authorList>
            <person name="Ota T."/>
            <person name="Suzuki Y."/>
            <person name="Nishikawa T."/>
            <person name="Otsuki T."/>
            <person name="Sugiyama T."/>
            <person name="Irie R."/>
            <person name="Wakamatsu A."/>
            <person name="Hayashi K."/>
            <person name="Sato H."/>
            <person name="Nagai K."/>
            <person name="Kimura K."/>
            <person name="Makita H."/>
            <person name="Sekine M."/>
            <person name="Obayashi M."/>
            <person name="Nishi T."/>
            <person name="Shibahara T."/>
            <person name="Tanaka T."/>
            <person name="Ishii S."/>
            <person name="Yamamoto J."/>
            <person name="Saito K."/>
            <person name="Kawai Y."/>
            <person name="Isono Y."/>
            <person name="Nakamura Y."/>
            <person name="Nagahari K."/>
            <person name="Murakami K."/>
            <person name="Yasuda T."/>
            <person name="Iwayanagi T."/>
            <person name="Wagatsuma M."/>
            <person name="Shiratori A."/>
            <person name="Sudo H."/>
            <person name="Hosoiri T."/>
            <person name="Kaku Y."/>
            <person name="Kodaira H."/>
            <person name="Kondo H."/>
            <person name="Sugawara M."/>
            <person name="Takahashi M."/>
            <person name="Kanda K."/>
            <person name="Yokoi T."/>
            <person name="Furuya T."/>
            <person name="Kikkawa E."/>
            <person name="Omura Y."/>
            <person name="Abe K."/>
            <person name="Kamihara K."/>
            <person name="Katsuta N."/>
            <person name="Sato K."/>
            <person name="Tanikawa M."/>
            <person name="Yamazaki M."/>
            <person name="Ninomiya K."/>
            <person name="Ishibashi T."/>
            <person name="Yamashita H."/>
            <person name="Murakawa K."/>
            <person name="Fujimori K."/>
            <person name="Tanai H."/>
            <person name="Kimata M."/>
            <person name="Watanabe M."/>
            <person name="Hiraoka S."/>
            <person name="Chiba Y."/>
            <person name="Ishida S."/>
            <person name="Ono Y."/>
            <person name="Takiguchi S."/>
            <person name="Watanabe S."/>
            <person name="Yosida M."/>
            <person name="Hotuta T."/>
            <person name="Kusano J."/>
            <person name="Kanehori K."/>
            <person name="Takahashi-Fujii A."/>
            <person name="Hara H."/>
            <person name="Tanase T.-O."/>
            <person name="Nomura Y."/>
            <person name="Togiya S."/>
            <person name="Komai F."/>
            <person name="Hara R."/>
            <person name="Takeuchi K."/>
            <person name="Arita M."/>
            <person name="Imose N."/>
            <person name="Musashino K."/>
            <person name="Yuuki H."/>
            <person name="Oshima A."/>
            <person name="Sasaki N."/>
            <person name="Aotsuka S."/>
            <person name="Yoshikawa Y."/>
            <person name="Matsunawa H."/>
            <person name="Ichihara T."/>
            <person name="Shiohata N."/>
            <person name="Sano S."/>
            <person name="Moriya S."/>
            <person name="Momiyama H."/>
            <person name="Satoh N."/>
            <person name="Takami S."/>
            <person name="Terashima Y."/>
            <person name="Suzuki O."/>
            <person name="Nakagawa S."/>
            <person name="Senoh A."/>
            <person name="Mizoguchi H."/>
            <person name="Goto Y."/>
            <person name="Shimizu F."/>
            <person name="Wakebe H."/>
            <person name="Hishigaki H."/>
            <person name="Watanabe T."/>
            <person name="Sugiyama A."/>
            <person name="Takemoto M."/>
            <person name="Kawakami B."/>
            <person name="Yamazaki M."/>
            <person name="Watanabe K."/>
            <person name="Kumagai A."/>
            <person name="Itakura S."/>
            <person name="Fukuzumi Y."/>
            <person name="Fujimori Y."/>
            <person name="Komiyama M."/>
            <person name="Tashiro H."/>
            <person name="Tanigami A."/>
            <person name="Fujiwara T."/>
            <person name="Ono T."/>
            <person name="Yamada K."/>
            <person name="Fujii Y."/>
            <person name="Ozaki K."/>
            <person name="Hirao M."/>
            <person name="Ohmori Y."/>
            <person name="Kawabata A."/>
            <person name="Hikiji T."/>
            <person name="Kobatake N."/>
            <person name="Inagaki H."/>
            <person name="Ikema Y."/>
            <person name="Okamoto S."/>
            <person name="Okitani R."/>
            <person name="Kawakami T."/>
            <person name="Noguchi S."/>
            <person name="Itoh T."/>
            <person name="Shigeta K."/>
            <person name="Senba T."/>
            <person name="Matsumura K."/>
            <person name="Nakajima Y."/>
            <person name="Mizuno T."/>
            <person name="Morinaga M."/>
            <person name="Sasaki M."/>
            <person name="Togashi T."/>
            <person name="Oyama M."/>
            <person name="Hata H."/>
            <person name="Watanabe M."/>
            <person name="Komatsu T."/>
            <person name="Mizushima-Sugano J."/>
            <person name="Satoh T."/>
            <person name="Shirai Y."/>
            <person name="Takahashi Y."/>
            <person name="Nakagawa K."/>
            <person name="Okumura K."/>
            <person name="Nagase T."/>
            <person name="Nomura N."/>
            <person name="Kikuchi H."/>
            <person name="Masuho Y."/>
            <person name="Yamashita R."/>
            <person name="Nakai K."/>
            <person name="Yada T."/>
            <person name="Nakamura Y."/>
            <person name="Ohara O."/>
            <person name="Isogai T."/>
            <person name="Sugano S."/>
        </authorList>
    </citation>
    <scope>NUCLEOTIDE SEQUENCE [LARGE SCALE MRNA]</scope>
    <source>
        <tissue>Embryo</tissue>
        <tissue>Spleen</tissue>
    </source>
</reference>
<reference key="3">
    <citation type="submission" date="2007-02" db="EMBL/GenBank/DDBJ databases">
        <authorList>
            <consortium name="NHLBI resequencing and genotyping service (RS&amp;G)"/>
        </authorList>
    </citation>
    <scope>NUCLEOTIDE SEQUENCE [GENOMIC DNA]</scope>
</reference>
<reference key="4">
    <citation type="submission" date="2005-07" db="EMBL/GenBank/DDBJ databases">
        <authorList>
            <person name="Mural R.J."/>
            <person name="Istrail S."/>
            <person name="Sutton G.G."/>
            <person name="Florea L."/>
            <person name="Halpern A.L."/>
            <person name="Mobarry C.M."/>
            <person name="Lippert R."/>
            <person name="Walenz B."/>
            <person name="Shatkay H."/>
            <person name="Dew I."/>
            <person name="Miller J.R."/>
            <person name="Flanigan M.J."/>
            <person name="Edwards N.J."/>
            <person name="Bolanos R."/>
            <person name="Fasulo D."/>
            <person name="Halldorsson B.V."/>
            <person name="Hannenhalli S."/>
            <person name="Turner R."/>
            <person name="Yooseph S."/>
            <person name="Lu F."/>
            <person name="Nusskern D.R."/>
            <person name="Shue B.C."/>
            <person name="Zheng X.H."/>
            <person name="Zhong F."/>
            <person name="Delcher A.L."/>
            <person name="Huson D.H."/>
            <person name="Kravitz S.A."/>
            <person name="Mouchard L."/>
            <person name="Reinert K."/>
            <person name="Remington K.A."/>
            <person name="Clark A.G."/>
            <person name="Waterman M.S."/>
            <person name="Eichler E.E."/>
            <person name="Adams M.D."/>
            <person name="Hunkapiller M.W."/>
            <person name="Myers E.W."/>
            <person name="Venter J.C."/>
        </authorList>
    </citation>
    <scope>NUCLEOTIDE SEQUENCE [LARGE SCALE GENOMIC DNA]</scope>
</reference>
<reference key="5">
    <citation type="journal article" date="2004" name="Genome Res.">
        <title>The status, quality, and expansion of the NIH full-length cDNA project: the Mammalian Gene Collection (MGC).</title>
        <authorList>
            <consortium name="The MGC Project Team"/>
        </authorList>
    </citation>
    <scope>NUCLEOTIDE SEQUENCE [LARGE SCALE MRNA]</scope>
    <source>
        <tissue>Cerebellum</tissue>
    </source>
</reference>
<reference key="6">
    <citation type="journal article" date="2007" name="Nature">
        <title>Genome-wide analysis of genetic alterations in acute lymphoblastic leukaemia.</title>
        <authorList>
            <person name="Mullighan C.G."/>
            <person name="Goorha S."/>
            <person name="Radtke I."/>
            <person name="Miller C.B."/>
            <person name="Coustan-Smith E."/>
            <person name="Dalton J.D."/>
            <person name="Girtman K."/>
            <person name="Mathew S."/>
            <person name="Ma J."/>
            <person name="Pounds S.B."/>
            <person name="Su X."/>
            <person name="Pui C.-H."/>
            <person name="Relling M.V."/>
            <person name="Evans W.E."/>
            <person name="Shurtleff S.A."/>
            <person name="Downing J.R."/>
        </authorList>
    </citation>
    <scope>NUCLEOTIDE SEQUENCE [MRNA] OF 73-1311</scope>
    <scope>CHROMOSOMAL TRANSLOCATION WITH PAX5</scope>
</reference>
<reference key="7">
    <citation type="journal article" date="2007" name="BMC Genomics">
        <title>The full-ORF clone resource of the German cDNA consortium.</title>
        <authorList>
            <person name="Bechtel S."/>
            <person name="Rosenfelder H."/>
            <person name="Duda A."/>
            <person name="Schmidt C.P."/>
            <person name="Ernst U."/>
            <person name="Wellenreuther R."/>
            <person name="Mehrle A."/>
            <person name="Schuster C."/>
            <person name="Bahr A."/>
            <person name="Bloecker H."/>
            <person name="Heubner D."/>
            <person name="Hoerlein A."/>
            <person name="Michel G."/>
            <person name="Wedler H."/>
            <person name="Koehrer K."/>
            <person name="Ottenwaelder B."/>
            <person name="Poustka A."/>
            <person name="Wiemann S."/>
            <person name="Schupp I."/>
        </authorList>
    </citation>
    <scope>NUCLEOTIDE SEQUENCE [LARGE SCALE MRNA] OF 729-1311</scope>
    <source>
        <tissue>Brain</tissue>
    </source>
</reference>
<reference key="8">
    <citation type="journal article" date="2002" name="Mol. Med.">
        <title>The Chediak-Higashi protein interacts with SNARE complex and signal transduction proteins.</title>
        <authorList>
            <person name="Tchernev V.T."/>
            <person name="Mansfield T.A."/>
            <person name="Giot L."/>
            <person name="Kumar A.M."/>
            <person name="Nandabalan K."/>
            <person name="Li Y."/>
            <person name="Mishra V.S."/>
            <person name="Detter J.C."/>
            <person name="Rothberg J.M."/>
            <person name="Wallace M.R."/>
            <person name="Southwick F.S."/>
            <person name="Kingsmore S.F."/>
        </authorList>
    </citation>
    <scope>NUCLEOTIDE SEQUENCE [MRNA] OF 1114-1311</scope>
    <scope>INTERACTION WITH LYST</scope>
</reference>
<reference key="9">
    <citation type="journal article" date="2009" name="Anal. Chem.">
        <title>Lys-N and trypsin cover complementary parts of the phosphoproteome in a refined SCX-based approach.</title>
        <authorList>
            <person name="Gauci S."/>
            <person name="Helbig A.O."/>
            <person name="Slijper M."/>
            <person name="Krijgsveld J."/>
            <person name="Heck A.J."/>
            <person name="Mohammed S."/>
        </authorList>
    </citation>
    <scope>IDENTIFICATION BY MASS SPECTROMETRY [LARGE SCALE ANALYSIS]</scope>
</reference>
<reference key="10">
    <citation type="journal article" date="2009" name="Sci. Signal.">
        <title>Quantitative phosphoproteomic analysis of T cell receptor signaling reveals system-wide modulation of protein-protein interactions.</title>
        <authorList>
            <person name="Mayya V."/>
            <person name="Lundgren D.H."/>
            <person name="Hwang S.-I."/>
            <person name="Rezaul K."/>
            <person name="Wu L."/>
            <person name="Eng J.K."/>
            <person name="Rodionov V."/>
            <person name="Han D.K."/>
        </authorList>
    </citation>
    <scope>PHOSPHORYLATION [LARGE SCALE ANALYSIS] AT SER-605 AND SER-608</scope>
    <scope>IDENTIFICATION BY MASS SPECTROMETRY [LARGE SCALE ANALYSIS]</scope>
    <source>
        <tissue>Leukemic T-cell</tissue>
    </source>
</reference>
<reference key="11">
    <citation type="journal article" date="2013" name="J. Proteome Res.">
        <title>Toward a comprehensive characterization of a human cancer cell phosphoproteome.</title>
        <authorList>
            <person name="Zhou H."/>
            <person name="Di Palma S."/>
            <person name="Preisinger C."/>
            <person name="Peng M."/>
            <person name="Polat A.N."/>
            <person name="Heck A.J."/>
            <person name="Mohammed S."/>
        </authorList>
    </citation>
    <scope>PHOSPHORYLATION [LARGE SCALE ANALYSIS] AT SER-546</scope>
    <scope>IDENTIFICATION BY MASS SPECTROMETRY [LARGE SCALE ANALYSIS]</scope>
    <source>
        <tissue>Erythroleukemia</tissue>
    </source>
</reference>
<reference key="12">
    <citation type="journal article" date="2017" name="Nat. Struct. Mol. Biol.">
        <title>Site-specific mapping of the human SUMO proteome reveals co-modification with phosphorylation.</title>
        <authorList>
            <person name="Hendriks I.A."/>
            <person name="Lyon D."/>
            <person name="Young C."/>
            <person name="Jensen L.J."/>
            <person name="Vertegaal A.C."/>
            <person name="Nielsen M.L."/>
        </authorList>
    </citation>
    <scope>SUMOYLATION [LARGE SCALE ANALYSIS] AT LYS-1146</scope>
    <scope>IDENTIFICATION BY MASS SPECTROMETRY [LARGE SCALE ANALYSIS]</scope>
</reference>
<sequence length="1311" mass="147866">MSRRKQAKPRSLKDPNCKLEDKTEDGEALDCKKRPEDGEELEDEAVHSCDSCLQVFESLSDITEHKINQCQLTDGVDVEDDPTCSWPASSPSSKDQTSPSHGEGCDFGEEEGGPGLPYPCQFCDKSFSRLSYLKHHEQSHSDKLPFKCTYCSRLFKHKRSRDRHIKLHTGDKKYHCSECDAAFSRSDHLKIHLKTHTSNKPYKCAICRRGFLSSSSLHGHMQVHERNKDGSQSGSRMEDWKMKDTQKCSQCEEGFDFPEDLQKHIAECHPECSPNEDRAALQCVYCHELFVEETSLMNHMEQVHSGEKKNSCSICSESFHTVEELYSHMDSHQQPESCNHSNSPSLVTVGYTSVSSTTPDSNLSVDSSTMVEAAPPIPKSRGRKRAAQQTPDMTGPSSKQAKVTYSCIYCNKQLFSSLAVLQIHLKTMHLDKPEQAHICQYCLEVLPSLYNLNEHLKQVHEAQDPGLIVSAMPAIVYQCNFCSEVVNDLNTLQEHIRCSHGFANPAAKDSNAFFCPHCYMGFLTDSSLEEHIRQVHCDLSGSRFGSPVLGTPKEPVVEVYSCSYCTNSPIFNSVLKLNKHIKENHKNIPLALNYIHNGKKSRALSPLSPVAIEQTSLKMMQAVGGAPARPTGEYICNQCGAKYTSLDSFQTHLKTHLDTVLPKLTCPQCNKEFPNQESLLKHVTIHFMITSTYYICESCDKQFTSVDDLQKHLLDMHTFVFFRCTLCQEVFDSKVSIQLHLAVKHSNEKKVYRCTSCNWDFRNETDLQLHVKHNHLENQGKVHKCIFCGESFGTEVELQCHITTHSKKYNCKFCSKAFHAIILLEKHLREKHCVFETKTPNCGTNGASEQVQKEEVELQTLLTNSQESHNSHDGSEEDVDTSEPMYGCDICGAAYTMETLLQNHQLRDHNIRPGESAIVKKKAELIKGNYKCNVCSRTFFSENGLREHMQTHLGPVKHYMCPICGERFPSLLTLTEHKVTHSKSLDTGNCRICKMPLQSEEEFLEHCQMHPDLRNSLTGFRCVVCMQTVTSTLELKIHGTFHMQKTGNGSAVQTTGRGQHVQKLYKCASCLKEFRSKQDLVKLDINGLPYGLCAGCVNLSKSASPGINVPPGTNRPGLGQNENLSAIEGKGKVGGLKTRCSSCNVKFESESELQNHIQTIHRELVPDSNSTQLKTPQVSPMPRISPSQSDEKKTYQCIKCQMVFYNEWDIQVHVANHMIDEGLNHECKLCSQTFDSPAKLQCHLIEHSFEGMGGTFKCPVCFTVFVQANKLQQHIFSAHGQEDKIYDCTQCPQKFFFQTELQNHTMTQHSS</sequence>
<dbReference type="EMBL" id="AJ518106">
    <property type="protein sequence ID" value="CAD57322.1"/>
    <property type="molecule type" value="mRNA"/>
</dbReference>
<dbReference type="EMBL" id="AK021452">
    <property type="protein sequence ID" value="BAB13829.1"/>
    <property type="status" value="ALT_INIT"/>
    <property type="molecule type" value="mRNA"/>
</dbReference>
<dbReference type="EMBL" id="AK027354">
    <property type="protein sequence ID" value="BAB55056.1"/>
    <property type="molecule type" value="mRNA"/>
</dbReference>
<dbReference type="EMBL" id="AK074046">
    <property type="protein sequence ID" value="BAB84872.1"/>
    <property type="molecule type" value="mRNA"/>
</dbReference>
<dbReference type="EMBL" id="EF445043">
    <property type="protein sequence ID" value="ACA06095.1"/>
    <property type="molecule type" value="Genomic_DNA"/>
</dbReference>
<dbReference type="EMBL" id="CH471088">
    <property type="protein sequence ID" value="EAX01201.1"/>
    <property type="molecule type" value="Genomic_DNA"/>
</dbReference>
<dbReference type="EMBL" id="BC113622">
    <property type="protein sequence ID" value="AAI13623.1"/>
    <property type="molecule type" value="mRNA"/>
</dbReference>
<dbReference type="EMBL" id="BC113648">
    <property type="protein sequence ID" value="AAI13649.1"/>
    <property type="molecule type" value="mRNA"/>
</dbReference>
<dbReference type="EMBL" id="DQ845345">
    <property type="protein sequence ID" value="ABI33104.1"/>
    <property type="status" value="ALT_INIT"/>
    <property type="molecule type" value="mRNA"/>
</dbReference>
<dbReference type="EMBL" id="AL117615">
    <property type="protein sequence ID" value="CAB56016.1"/>
    <property type="molecule type" value="mRNA"/>
</dbReference>
<dbReference type="EMBL" id="AF141339">
    <property type="protein sequence ID" value="AAG49442.1"/>
    <property type="molecule type" value="mRNA"/>
</dbReference>
<dbReference type="CCDS" id="CCDS32806.1"/>
<dbReference type="PIR" id="T17326">
    <property type="entry name" value="T17326"/>
</dbReference>
<dbReference type="RefSeq" id="NP_001295154.1">
    <property type="nucleotide sequence ID" value="NM_001308225.1"/>
</dbReference>
<dbReference type="RefSeq" id="NP_056276.1">
    <property type="nucleotide sequence ID" value="NM_015461.3"/>
</dbReference>
<dbReference type="RefSeq" id="XP_011524213.1">
    <property type="nucleotide sequence ID" value="XM_011525911.1"/>
</dbReference>
<dbReference type="RefSeq" id="XP_016881187.1">
    <property type="nucleotide sequence ID" value="XM_017025698.1"/>
</dbReference>
<dbReference type="BioGRID" id="117425">
    <property type="interactions" value="35"/>
</dbReference>
<dbReference type="FunCoup" id="Q96K83">
    <property type="interactions" value="2137"/>
</dbReference>
<dbReference type="IntAct" id="Q96K83">
    <property type="interactions" value="26"/>
</dbReference>
<dbReference type="STRING" id="9606.ENSP00000354794"/>
<dbReference type="GlyGen" id="Q96K83">
    <property type="glycosylation" value="1 site, 1 O-linked glycan (1 site)"/>
</dbReference>
<dbReference type="iPTMnet" id="Q96K83"/>
<dbReference type="PhosphoSitePlus" id="Q96K83"/>
<dbReference type="BioMuta" id="ZNF521"/>
<dbReference type="DMDM" id="74760909"/>
<dbReference type="jPOST" id="Q96K83"/>
<dbReference type="MassIVE" id="Q96K83"/>
<dbReference type="PaxDb" id="9606-ENSP00000354794"/>
<dbReference type="PeptideAtlas" id="Q96K83"/>
<dbReference type="ProteomicsDB" id="77052"/>
<dbReference type="Antibodypedia" id="7815">
    <property type="antibodies" value="197 antibodies from 24 providers"/>
</dbReference>
<dbReference type="DNASU" id="25925"/>
<dbReference type="Ensembl" id="ENST00000361524.8">
    <property type="protein sequence ID" value="ENSP00000354794.3"/>
    <property type="gene ID" value="ENSG00000198795.11"/>
</dbReference>
<dbReference type="Ensembl" id="ENST00000538137.6">
    <property type="protein sequence ID" value="ENSP00000440768.2"/>
    <property type="gene ID" value="ENSG00000198795.11"/>
</dbReference>
<dbReference type="GeneID" id="25925"/>
<dbReference type="KEGG" id="hsa:25925"/>
<dbReference type="MANE-Select" id="ENST00000361524.8">
    <property type="protein sequence ID" value="ENSP00000354794.3"/>
    <property type="RefSeq nucleotide sequence ID" value="NM_015461.3"/>
    <property type="RefSeq protein sequence ID" value="NP_056276.1"/>
</dbReference>
<dbReference type="UCSC" id="uc002kvk.3">
    <property type="organism name" value="human"/>
</dbReference>
<dbReference type="AGR" id="HGNC:24605"/>
<dbReference type="CTD" id="25925"/>
<dbReference type="DisGeNET" id="25925"/>
<dbReference type="GeneCards" id="ZNF521"/>
<dbReference type="HGNC" id="HGNC:24605">
    <property type="gene designation" value="ZNF521"/>
</dbReference>
<dbReference type="HPA" id="ENSG00000198795">
    <property type="expression patterns" value="Tissue enhanced (brain)"/>
</dbReference>
<dbReference type="MIM" id="610974">
    <property type="type" value="gene"/>
</dbReference>
<dbReference type="neXtProt" id="NX_Q96K83"/>
<dbReference type="OpenTargets" id="ENSG00000198795"/>
<dbReference type="PharmGKB" id="PA134956321"/>
<dbReference type="VEuPathDB" id="HostDB:ENSG00000198795"/>
<dbReference type="eggNOG" id="KOG1721">
    <property type="taxonomic scope" value="Eukaryota"/>
</dbReference>
<dbReference type="GeneTree" id="ENSGT00940000159287"/>
<dbReference type="HOGENOM" id="CLU_004018_0_0_1"/>
<dbReference type="InParanoid" id="Q96K83"/>
<dbReference type="OMA" id="CDRTFPR"/>
<dbReference type="OrthoDB" id="10014897at2759"/>
<dbReference type="PAN-GO" id="Q96K83">
    <property type="GO annotations" value="4 GO annotations based on evolutionary models"/>
</dbReference>
<dbReference type="PhylomeDB" id="Q96K83"/>
<dbReference type="TreeFam" id="TF331504"/>
<dbReference type="PathwayCommons" id="Q96K83"/>
<dbReference type="Reactome" id="R-HSA-8940973">
    <property type="pathway name" value="RUNX2 regulates osteoblast differentiation"/>
</dbReference>
<dbReference type="Reactome" id="R-HSA-9823739">
    <property type="pathway name" value="Formation of the anterior neural plate"/>
</dbReference>
<dbReference type="Reactome" id="R-HSA-9832991">
    <property type="pathway name" value="Formation of the posterior neural plate"/>
</dbReference>
<dbReference type="SignaLink" id="Q96K83"/>
<dbReference type="SIGNOR" id="Q96K83"/>
<dbReference type="BioGRID-ORCS" id="25925">
    <property type="hits" value="21 hits in 1174 CRISPR screens"/>
</dbReference>
<dbReference type="ChiTaRS" id="ZNF521">
    <property type="organism name" value="human"/>
</dbReference>
<dbReference type="GenomeRNAi" id="25925"/>
<dbReference type="Pharos" id="Q96K83">
    <property type="development level" value="Tbio"/>
</dbReference>
<dbReference type="PRO" id="PR:Q96K83"/>
<dbReference type="Proteomes" id="UP000005640">
    <property type="component" value="Chromosome 18"/>
</dbReference>
<dbReference type="RNAct" id="Q96K83">
    <property type="molecule type" value="protein"/>
</dbReference>
<dbReference type="Bgee" id="ENSG00000198795">
    <property type="expression patterns" value="Expressed in cerebellar vermis and 176 other cell types or tissues"/>
</dbReference>
<dbReference type="ExpressionAtlas" id="Q96K83">
    <property type="expression patterns" value="baseline and differential"/>
</dbReference>
<dbReference type="GO" id="GO:0005654">
    <property type="term" value="C:nucleoplasm"/>
    <property type="evidence" value="ECO:0000314"/>
    <property type="project" value="HPA"/>
</dbReference>
<dbReference type="GO" id="GO:0005634">
    <property type="term" value="C:nucleus"/>
    <property type="evidence" value="ECO:0000314"/>
    <property type="project" value="MGI"/>
</dbReference>
<dbReference type="GO" id="GO:0003677">
    <property type="term" value="F:DNA binding"/>
    <property type="evidence" value="ECO:0007669"/>
    <property type="project" value="UniProtKB-KW"/>
</dbReference>
<dbReference type="GO" id="GO:0019904">
    <property type="term" value="F:protein domain specific binding"/>
    <property type="evidence" value="ECO:0000353"/>
    <property type="project" value="UniProtKB"/>
</dbReference>
<dbReference type="GO" id="GO:0008270">
    <property type="term" value="F:zinc ion binding"/>
    <property type="evidence" value="ECO:0007669"/>
    <property type="project" value="UniProtKB-KW"/>
</dbReference>
<dbReference type="GO" id="GO:0048663">
    <property type="term" value="P:neuron fate commitment"/>
    <property type="evidence" value="ECO:0007669"/>
    <property type="project" value="Ensembl"/>
</dbReference>
<dbReference type="GO" id="GO:0006357">
    <property type="term" value="P:regulation of transcription by RNA polymerase II"/>
    <property type="evidence" value="ECO:0000318"/>
    <property type="project" value="GO_Central"/>
</dbReference>
<dbReference type="FunFam" id="3.30.160.60:FF:000483">
    <property type="entry name" value="Zinc finger protein 423"/>
    <property type="match status" value="1"/>
</dbReference>
<dbReference type="FunFam" id="3.30.160.60:FF:000244">
    <property type="entry name" value="zinc finger protein 423"/>
    <property type="match status" value="1"/>
</dbReference>
<dbReference type="FunFam" id="3.30.160.60:FF:000107">
    <property type="entry name" value="Zinc finger protein 521"/>
    <property type="match status" value="1"/>
</dbReference>
<dbReference type="FunFam" id="3.30.160.60:FF:000143">
    <property type="entry name" value="Zinc finger protein 521"/>
    <property type="match status" value="1"/>
</dbReference>
<dbReference type="FunFam" id="3.30.160.60:FF:000167">
    <property type="entry name" value="Zinc finger protein 521"/>
    <property type="match status" value="1"/>
</dbReference>
<dbReference type="FunFam" id="3.30.160.60:FF:000261">
    <property type="entry name" value="Zinc finger protein 521"/>
    <property type="match status" value="1"/>
</dbReference>
<dbReference type="FunFam" id="3.30.160.60:FF:000998">
    <property type="entry name" value="Zinc finger protein 521"/>
    <property type="match status" value="1"/>
</dbReference>
<dbReference type="FunFam" id="3.30.160.60:FF:002441">
    <property type="entry name" value="Zinc finger protein 521"/>
    <property type="match status" value="1"/>
</dbReference>
<dbReference type="FunFam" id="3.30.160.60:FF:002477">
    <property type="entry name" value="Zinc finger protein 521"/>
    <property type="match status" value="1"/>
</dbReference>
<dbReference type="FunFam" id="3.30.160.60:FF:003011">
    <property type="entry name" value="zinc finger protein 521 isoform X3"/>
    <property type="match status" value="1"/>
</dbReference>
<dbReference type="Gene3D" id="3.30.160.60">
    <property type="entry name" value="Classic Zinc Finger"/>
    <property type="match status" value="14"/>
</dbReference>
<dbReference type="InterPro" id="IPR036236">
    <property type="entry name" value="Znf_C2H2_sf"/>
</dbReference>
<dbReference type="InterPro" id="IPR013087">
    <property type="entry name" value="Znf_C2H2_type"/>
</dbReference>
<dbReference type="PANTHER" id="PTHR24379:SF128">
    <property type="entry name" value="C2H2-TYPE DOMAIN-CONTAINING PROTEIN"/>
    <property type="match status" value="1"/>
</dbReference>
<dbReference type="PANTHER" id="PTHR24379">
    <property type="entry name" value="KRAB AND ZINC FINGER DOMAIN-CONTAINING"/>
    <property type="match status" value="1"/>
</dbReference>
<dbReference type="Pfam" id="PF00096">
    <property type="entry name" value="zf-C2H2"/>
    <property type="match status" value="5"/>
</dbReference>
<dbReference type="Pfam" id="PF13912">
    <property type="entry name" value="zf-C2H2_6"/>
    <property type="match status" value="6"/>
</dbReference>
<dbReference type="Pfam" id="PF12874">
    <property type="entry name" value="zf-met"/>
    <property type="match status" value="1"/>
</dbReference>
<dbReference type="SMART" id="SM00355">
    <property type="entry name" value="ZnF_C2H2"/>
    <property type="match status" value="30"/>
</dbReference>
<dbReference type="SUPFAM" id="SSF57667">
    <property type="entry name" value="beta-beta-alpha zinc fingers"/>
    <property type="match status" value="10"/>
</dbReference>
<dbReference type="PROSITE" id="PS00028">
    <property type="entry name" value="ZINC_FINGER_C2H2_1"/>
    <property type="match status" value="27"/>
</dbReference>
<dbReference type="PROSITE" id="PS50157">
    <property type="entry name" value="ZINC_FINGER_C2H2_2"/>
    <property type="match status" value="24"/>
</dbReference>
<accession>Q96K83</accession>
<accession>A3QVP7</accession>
<accession>B0YJB7</accession>
<accession>Q8IXI0</accession>
<accession>Q8TES6</accession>
<accession>Q9C065</accession>
<accession>Q9HAL5</accession>
<accession>Q9UFK4</accession>
<gene>
    <name type="primary">ZNF521</name>
    <name type="synonym">EHZF</name>
    <name type="synonym">LIP3</name>
</gene>
<name>ZN521_HUMAN</name>